<accession>A7ZCN6</accession>
<keyword id="KW-0687">Ribonucleoprotein</keyword>
<keyword id="KW-0689">Ribosomal protein</keyword>
<feature type="chain" id="PRO_1000006978" description="Large ribosomal subunit protein bL12">
    <location>
        <begin position="1"/>
        <end position="125"/>
    </location>
</feature>
<protein>
    <recommendedName>
        <fullName evidence="1">Large ribosomal subunit protein bL12</fullName>
    </recommendedName>
    <alternativeName>
        <fullName evidence="2">50S ribosomal protein L7/L12</fullName>
    </alternativeName>
</protein>
<dbReference type="EMBL" id="CP000792">
    <property type="protein sequence ID" value="EAT97377.1"/>
    <property type="molecule type" value="Genomic_DNA"/>
</dbReference>
<dbReference type="RefSeq" id="WP_012001504.1">
    <property type="nucleotide sequence ID" value="NC_009802.2"/>
</dbReference>
<dbReference type="SMR" id="A7ZCN6"/>
<dbReference type="STRING" id="360104.CCC13826_0173"/>
<dbReference type="KEGG" id="cco:CCC13826_0173"/>
<dbReference type="eggNOG" id="COG0222">
    <property type="taxonomic scope" value="Bacteria"/>
</dbReference>
<dbReference type="HOGENOM" id="CLU_086499_3_0_7"/>
<dbReference type="OrthoDB" id="9811748at2"/>
<dbReference type="Proteomes" id="UP000001121">
    <property type="component" value="Chromosome"/>
</dbReference>
<dbReference type="GO" id="GO:0022625">
    <property type="term" value="C:cytosolic large ribosomal subunit"/>
    <property type="evidence" value="ECO:0007669"/>
    <property type="project" value="TreeGrafter"/>
</dbReference>
<dbReference type="GO" id="GO:0003729">
    <property type="term" value="F:mRNA binding"/>
    <property type="evidence" value="ECO:0007669"/>
    <property type="project" value="TreeGrafter"/>
</dbReference>
<dbReference type="GO" id="GO:0003735">
    <property type="term" value="F:structural constituent of ribosome"/>
    <property type="evidence" value="ECO:0007669"/>
    <property type="project" value="InterPro"/>
</dbReference>
<dbReference type="GO" id="GO:0006412">
    <property type="term" value="P:translation"/>
    <property type="evidence" value="ECO:0007669"/>
    <property type="project" value="UniProtKB-UniRule"/>
</dbReference>
<dbReference type="CDD" id="cd00387">
    <property type="entry name" value="Ribosomal_L7_L12"/>
    <property type="match status" value="1"/>
</dbReference>
<dbReference type="FunFam" id="3.30.1390.10:FF:000001">
    <property type="entry name" value="50S ribosomal protein L7/L12"/>
    <property type="match status" value="1"/>
</dbReference>
<dbReference type="Gene3D" id="3.30.1390.10">
    <property type="match status" value="1"/>
</dbReference>
<dbReference type="Gene3D" id="1.20.5.710">
    <property type="entry name" value="Single helix bin"/>
    <property type="match status" value="1"/>
</dbReference>
<dbReference type="HAMAP" id="MF_00368">
    <property type="entry name" value="Ribosomal_bL12"/>
    <property type="match status" value="1"/>
</dbReference>
<dbReference type="InterPro" id="IPR000206">
    <property type="entry name" value="Ribosomal_bL12"/>
</dbReference>
<dbReference type="InterPro" id="IPR013823">
    <property type="entry name" value="Ribosomal_bL12_C"/>
</dbReference>
<dbReference type="InterPro" id="IPR014719">
    <property type="entry name" value="Ribosomal_bL12_C/ClpS-like"/>
</dbReference>
<dbReference type="InterPro" id="IPR008932">
    <property type="entry name" value="Ribosomal_bL12_oligo"/>
</dbReference>
<dbReference type="InterPro" id="IPR036235">
    <property type="entry name" value="Ribosomal_bL12_oligo_N_sf"/>
</dbReference>
<dbReference type="NCBIfam" id="TIGR00855">
    <property type="entry name" value="L12"/>
    <property type="match status" value="1"/>
</dbReference>
<dbReference type="PANTHER" id="PTHR45987">
    <property type="entry name" value="39S RIBOSOMAL PROTEIN L12"/>
    <property type="match status" value="1"/>
</dbReference>
<dbReference type="PANTHER" id="PTHR45987:SF4">
    <property type="entry name" value="LARGE RIBOSOMAL SUBUNIT PROTEIN BL12M"/>
    <property type="match status" value="1"/>
</dbReference>
<dbReference type="Pfam" id="PF00542">
    <property type="entry name" value="Ribosomal_L12"/>
    <property type="match status" value="1"/>
</dbReference>
<dbReference type="Pfam" id="PF16320">
    <property type="entry name" value="Ribosomal_L12_N"/>
    <property type="match status" value="1"/>
</dbReference>
<dbReference type="SUPFAM" id="SSF54736">
    <property type="entry name" value="ClpS-like"/>
    <property type="match status" value="1"/>
</dbReference>
<dbReference type="SUPFAM" id="SSF48300">
    <property type="entry name" value="Ribosomal protein L7/12, oligomerisation (N-terminal) domain"/>
    <property type="match status" value="1"/>
</dbReference>
<proteinExistence type="inferred from homology"/>
<sequence length="125" mass="13015">MAITKEDVLEFISNLSVLELSELVKEFEEKFGVSAAPVMVAGGAVAAGGAAAAEEKTEFNIVLVDSGDKKINVIKVVRALTGLGLKEAKDAVEGTPSVLKEGVSKDEAEAAKKELEEAGAKVELK</sequence>
<comment type="function">
    <text evidence="1">Forms part of the ribosomal stalk which helps the ribosome interact with GTP-bound translation factors. Is thus essential for accurate translation.</text>
</comment>
<comment type="subunit">
    <text evidence="1">Homodimer. Part of the ribosomal stalk of the 50S ribosomal subunit. Forms a multimeric L10(L12)X complex, where L10 forms an elongated spine to which 2 to 4 L12 dimers bind in a sequential fashion. Binds GTP-bound translation factors.</text>
</comment>
<comment type="similarity">
    <text evidence="1">Belongs to the bacterial ribosomal protein bL12 family.</text>
</comment>
<evidence type="ECO:0000255" key="1">
    <source>
        <dbReference type="HAMAP-Rule" id="MF_00368"/>
    </source>
</evidence>
<evidence type="ECO:0000305" key="2"/>
<gene>
    <name evidence="1" type="primary">rplL</name>
    <name type="ordered locus">Ccon26_06620</name>
    <name type="ORF">CCC13826_0173</name>
</gene>
<name>RL7_CAMC1</name>
<reference key="1">
    <citation type="submission" date="2007-10" db="EMBL/GenBank/DDBJ databases">
        <title>Genome sequence of Campylobacter concisus 13826 isolated from human feces.</title>
        <authorList>
            <person name="Fouts D.E."/>
            <person name="Mongodin E.F."/>
            <person name="Puiu D."/>
            <person name="Sebastian Y."/>
            <person name="Miller W.G."/>
            <person name="Mandrell R.E."/>
            <person name="On S."/>
            <person name="Nelson K.E."/>
        </authorList>
    </citation>
    <scope>NUCLEOTIDE SEQUENCE [LARGE SCALE GENOMIC DNA]</scope>
    <source>
        <strain>13826</strain>
    </source>
</reference>
<organism>
    <name type="scientific">Campylobacter concisus (strain 13826)</name>
    <dbReference type="NCBI Taxonomy" id="360104"/>
    <lineage>
        <taxon>Bacteria</taxon>
        <taxon>Pseudomonadati</taxon>
        <taxon>Campylobacterota</taxon>
        <taxon>Epsilonproteobacteria</taxon>
        <taxon>Campylobacterales</taxon>
        <taxon>Campylobacteraceae</taxon>
        <taxon>Campylobacter</taxon>
    </lineage>
</organism>